<comment type="function">
    <text evidence="1">Catalyzes the sequential condensation of isopentenyl diphosphate (IPP) with (2E,6E)-farnesyl diphosphate (E,E-FPP) to yield (2Z,6Z,10Z,14Z,18Z,22Z,26Z,30Z,34E,38E)-undecaprenyl diphosphate (di-trans,octa-cis-UPP). UPP is the precursor of glycosyl carrier lipid in the biosynthesis of bacterial cell wall polysaccharide components such as peptidoglycan and lipopolysaccharide.</text>
</comment>
<comment type="catalytic activity">
    <reaction evidence="1">
        <text>8 isopentenyl diphosphate + (2E,6E)-farnesyl diphosphate = di-trans,octa-cis-undecaprenyl diphosphate + 8 diphosphate</text>
        <dbReference type="Rhea" id="RHEA:27551"/>
        <dbReference type="ChEBI" id="CHEBI:33019"/>
        <dbReference type="ChEBI" id="CHEBI:58405"/>
        <dbReference type="ChEBI" id="CHEBI:128769"/>
        <dbReference type="ChEBI" id="CHEBI:175763"/>
        <dbReference type="EC" id="2.5.1.31"/>
    </reaction>
</comment>
<comment type="cofactor">
    <cofactor evidence="1">
        <name>Mg(2+)</name>
        <dbReference type="ChEBI" id="CHEBI:18420"/>
    </cofactor>
    <text evidence="1">Binds 2 magnesium ions per subunit.</text>
</comment>
<comment type="subunit">
    <text evidence="1">Homodimer.</text>
</comment>
<comment type="similarity">
    <text evidence="1">Belongs to the UPP synthase family.</text>
</comment>
<reference key="1">
    <citation type="journal article" date="2001" name="Nature">
        <title>Complete genome sequence of a multiple drug resistant Salmonella enterica serovar Typhi CT18.</title>
        <authorList>
            <person name="Parkhill J."/>
            <person name="Dougan G."/>
            <person name="James K.D."/>
            <person name="Thomson N.R."/>
            <person name="Pickard D."/>
            <person name="Wain J."/>
            <person name="Churcher C.M."/>
            <person name="Mungall K.L."/>
            <person name="Bentley S.D."/>
            <person name="Holden M.T.G."/>
            <person name="Sebaihia M."/>
            <person name="Baker S."/>
            <person name="Basham D."/>
            <person name="Brooks K."/>
            <person name="Chillingworth T."/>
            <person name="Connerton P."/>
            <person name="Cronin A."/>
            <person name="Davis P."/>
            <person name="Davies R.M."/>
            <person name="Dowd L."/>
            <person name="White N."/>
            <person name="Farrar J."/>
            <person name="Feltwell T."/>
            <person name="Hamlin N."/>
            <person name="Haque A."/>
            <person name="Hien T.T."/>
            <person name="Holroyd S."/>
            <person name="Jagels K."/>
            <person name="Krogh A."/>
            <person name="Larsen T.S."/>
            <person name="Leather S."/>
            <person name="Moule S."/>
            <person name="O'Gaora P."/>
            <person name="Parry C."/>
            <person name="Quail M.A."/>
            <person name="Rutherford K.M."/>
            <person name="Simmonds M."/>
            <person name="Skelton J."/>
            <person name="Stevens K."/>
            <person name="Whitehead S."/>
            <person name="Barrell B.G."/>
        </authorList>
    </citation>
    <scope>NUCLEOTIDE SEQUENCE [LARGE SCALE GENOMIC DNA]</scope>
    <source>
        <strain>CT18</strain>
    </source>
</reference>
<reference key="2">
    <citation type="journal article" date="2003" name="J. Bacteriol.">
        <title>Comparative genomics of Salmonella enterica serovar Typhi strains Ty2 and CT18.</title>
        <authorList>
            <person name="Deng W."/>
            <person name="Liou S.-R."/>
            <person name="Plunkett G. III"/>
            <person name="Mayhew G.F."/>
            <person name="Rose D.J."/>
            <person name="Burland V."/>
            <person name="Kodoyianni V."/>
            <person name="Schwartz D.C."/>
            <person name="Blattner F.R."/>
        </authorList>
    </citation>
    <scope>NUCLEOTIDE SEQUENCE [LARGE SCALE GENOMIC DNA]</scope>
    <source>
        <strain>ATCC 700931 / Ty2</strain>
    </source>
</reference>
<gene>
    <name evidence="1" type="primary">uppS</name>
    <name type="ordered locus">STY0244</name>
    <name type="ordered locus">t0222</name>
</gene>
<accession>Q8Z9A5</accession>
<proteinExistence type="inferred from homology"/>
<organism>
    <name type="scientific">Salmonella typhi</name>
    <dbReference type="NCBI Taxonomy" id="90370"/>
    <lineage>
        <taxon>Bacteria</taxon>
        <taxon>Pseudomonadati</taxon>
        <taxon>Pseudomonadota</taxon>
        <taxon>Gammaproteobacteria</taxon>
        <taxon>Enterobacterales</taxon>
        <taxon>Enterobacteriaceae</taxon>
        <taxon>Salmonella</taxon>
    </lineage>
</organism>
<sequence>MLSATQPVSENLPAHGCRHVAIIMDGNGRWAKKQGKIRAFGHKAGAKSVRRAVSFAANNGIDALTLYAFSSENWNRPAQEVSALMELFVWALDSEVKSLHRHNVRLRIIGDISRFNSRLQERIRKSEALTAHNTGLTLNIAANYGGRWDIVQGVRQLAELVQAGVLRPDQIDEERLGQQICMHELAPVDLVIRTGGEHRISNFLLWQIAYAELYFTDVLWPDFDEQDFEGALHAFANRERRFGGTEPGDDKA</sequence>
<evidence type="ECO:0000255" key="1">
    <source>
        <dbReference type="HAMAP-Rule" id="MF_01139"/>
    </source>
</evidence>
<name>UPPS_SALTI</name>
<dbReference type="EC" id="2.5.1.31" evidence="1"/>
<dbReference type="EMBL" id="AL513382">
    <property type="protein sequence ID" value="CAD08679.1"/>
    <property type="molecule type" value="Genomic_DNA"/>
</dbReference>
<dbReference type="EMBL" id="AE014613">
    <property type="protein sequence ID" value="AAO67952.1"/>
    <property type="molecule type" value="Genomic_DNA"/>
</dbReference>
<dbReference type="RefSeq" id="NP_454828.1">
    <property type="nucleotide sequence ID" value="NC_003198.1"/>
</dbReference>
<dbReference type="RefSeq" id="WP_000947409.1">
    <property type="nucleotide sequence ID" value="NZ_WSUR01000009.1"/>
</dbReference>
<dbReference type="SMR" id="Q8Z9A5"/>
<dbReference type="STRING" id="220341.gene:17584277"/>
<dbReference type="KEGG" id="stt:t0222"/>
<dbReference type="KEGG" id="sty:STY0244"/>
<dbReference type="PATRIC" id="fig|220341.7.peg.244"/>
<dbReference type="eggNOG" id="COG0020">
    <property type="taxonomic scope" value="Bacteria"/>
</dbReference>
<dbReference type="HOGENOM" id="CLU_038505_1_1_6"/>
<dbReference type="OMA" id="FDRRDLW"/>
<dbReference type="OrthoDB" id="4191603at2"/>
<dbReference type="Proteomes" id="UP000000541">
    <property type="component" value="Chromosome"/>
</dbReference>
<dbReference type="Proteomes" id="UP000002670">
    <property type="component" value="Chromosome"/>
</dbReference>
<dbReference type="GO" id="GO:0005829">
    <property type="term" value="C:cytosol"/>
    <property type="evidence" value="ECO:0007669"/>
    <property type="project" value="TreeGrafter"/>
</dbReference>
<dbReference type="GO" id="GO:0008834">
    <property type="term" value="F:ditrans,polycis-undecaprenyl-diphosphate synthase [(2E,6E)-farnesyl-diphosphate specific] activity"/>
    <property type="evidence" value="ECO:0007669"/>
    <property type="project" value="UniProtKB-UniRule"/>
</dbReference>
<dbReference type="GO" id="GO:0000287">
    <property type="term" value="F:magnesium ion binding"/>
    <property type="evidence" value="ECO:0007669"/>
    <property type="project" value="UniProtKB-UniRule"/>
</dbReference>
<dbReference type="GO" id="GO:0071555">
    <property type="term" value="P:cell wall organization"/>
    <property type="evidence" value="ECO:0007669"/>
    <property type="project" value="UniProtKB-KW"/>
</dbReference>
<dbReference type="GO" id="GO:0009252">
    <property type="term" value="P:peptidoglycan biosynthetic process"/>
    <property type="evidence" value="ECO:0007669"/>
    <property type="project" value="UniProtKB-UniRule"/>
</dbReference>
<dbReference type="GO" id="GO:0016094">
    <property type="term" value="P:polyprenol biosynthetic process"/>
    <property type="evidence" value="ECO:0007669"/>
    <property type="project" value="TreeGrafter"/>
</dbReference>
<dbReference type="GO" id="GO:0008360">
    <property type="term" value="P:regulation of cell shape"/>
    <property type="evidence" value="ECO:0007669"/>
    <property type="project" value="UniProtKB-KW"/>
</dbReference>
<dbReference type="CDD" id="cd00475">
    <property type="entry name" value="Cis_IPPS"/>
    <property type="match status" value="1"/>
</dbReference>
<dbReference type="FunFam" id="3.40.1180.10:FF:000001">
    <property type="entry name" value="(2E,6E)-farnesyl-diphosphate-specific ditrans,polycis-undecaprenyl-diphosphate synthase"/>
    <property type="match status" value="1"/>
</dbReference>
<dbReference type="Gene3D" id="3.40.1180.10">
    <property type="entry name" value="Decaprenyl diphosphate synthase-like"/>
    <property type="match status" value="1"/>
</dbReference>
<dbReference type="HAMAP" id="MF_01139">
    <property type="entry name" value="ISPT"/>
    <property type="match status" value="1"/>
</dbReference>
<dbReference type="InterPro" id="IPR001441">
    <property type="entry name" value="UPP_synth-like"/>
</dbReference>
<dbReference type="InterPro" id="IPR018520">
    <property type="entry name" value="UPP_synth-like_CS"/>
</dbReference>
<dbReference type="InterPro" id="IPR036424">
    <property type="entry name" value="UPP_synth-like_sf"/>
</dbReference>
<dbReference type="NCBIfam" id="NF007596">
    <property type="entry name" value="PRK10240.1"/>
    <property type="match status" value="1"/>
</dbReference>
<dbReference type="NCBIfam" id="TIGR00055">
    <property type="entry name" value="uppS"/>
    <property type="match status" value="1"/>
</dbReference>
<dbReference type="PANTHER" id="PTHR10291:SF0">
    <property type="entry name" value="DEHYDRODOLICHYL DIPHOSPHATE SYNTHASE 2"/>
    <property type="match status" value="1"/>
</dbReference>
<dbReference type="PANTHER" id="PTHR10291">
    <property type="entry name" value="DEHYDRODOLICHYL DIPHOSPHATE SYNTHASE FAMILY MEMBER"/>
    <property type="match status" value="1"/>
</dbReference>
<dbReference type="Pfam" id="PF01255">
    <property type="entry name" value="Prenyltransf"/>
    <property type="match status" value="1"/>
</dbReference>
<dbReference type="SUPFAM" id="SSF64005">
    <property type="entry name" value="Undecaprenyl diphosphate synthase"/>
    <property type="match status" value="1"/>
</dbReference>
<dbReference type="PROSITE" id="PS01066">
    <property type="entry name" value="UPP_SYNTHASE"/>
    <property type="match status" value="1"/>
</dbReference>
<keyword id="KW-0133">Cell shape</keyword>
<keyword id="KW-0961">Cell wall biogenesis/degradation</keyword>
<keyword id="KW-0460">Magnesium</keyword>
<keyword id="KW-0479">Metal-binding</keyword>
<keyword id="KW-0573">Peptidoglycan synthesis</keyword>
<keyword id="KW-0808">Transferase</keyword>
<protein>
    <recommendedName>
        <fullName evidence="1">Ditrans,polycis-undecaprenyl-diphosphate synthase ((2E,6E)-farnesyl-diphosphate specific)</fullName>
        <ecNumber evidence="1">2.5.1.31</ecNumber>
    </recommendedName>
    <alternativeName>
        <fullName evidence="1">Ditrans,polycis-undecaprenylcistransferase</fullName>
    </alternativeName>
    <alternativeName>
        <fullName evidence="1">Undecaprenyl diphosphate synthase</fullName>
        <shortName evidence="1">UDS</shortName>
    </alternativeName>
    <alternativeName>
        <fullName evidence="1">Undecaprenyl pyrophosphate synthase</fullName>
        <shortName evidence="1">UPP synthase</shortName>
    </alternativeName>
</protein>
<feature type="chain" id="PRO_0000123667" description="Ditrans,polycis-undecaprenyl-diphosphate synthase ((2E,6E)-farnesyl-diphosphate specific)">
    <location>
        <begin position="1"/>
        <end position="252"/>
    </location>
</feature>
<feature type="active site" evidence="1">
    <location>
        <position position="25"/>
    </location>
</feature>
<feature type="active site" description="Proton acceptor" evidence="1">
    <location>
        <position position="73"/>
    </location>
</feature>
<feature type="binding site" evidence="1">
    <location>
        <position position="25"/>
    </location>
    <ligand>
        <name>Mg(2+)</name>
        <dbReference type="ChEBI" id="CHEBI:18420"/>
    </ligand>
</feature>
<feature type="binding site" evidence="1">
    <location>
        <begin position="26"/>
        <end position="29"/>
    </location>
    <ligand>
        <name>substrate</name>
    </ligand>
</feature>
<feature type="binding site" evidence="1">
    <location>
        <position position="30"/>
    </location>
    <ligand>
        <name>substrate</name>
    </ligand>
</feature>
<feature type="binding site" evidence="1">
    <location>
        <position position="38"/>
    </location>
    <ligand>
        <name>substrate</name>
    </ligand>
</feature>
<feature type="binding site" evidence="1">
    <location>
        <position position="42"/>
    </location>
    <ligand>
        <name>substrate</name>
    </ligand>
</feature>
<feature type="binding site" evidence="1">
    <location>
        <begin position="70"/>
        <end position="72"/>
    </location>
    <ligand>
        <name>substrate</name>
    </ligand>
</feature>
<feature type="binding site" evidence="1">
    <location>
        <position position="74"/>
    </location>
    <ligand>
        <name>substrate</name>
    </ligand>
</feature>
<feature type="binding site" evidence="1">
    <location>
        <position position="76"/>
    </location>
    <ligand>
        <name>substrate</name>
    </ligand>
</feature>
<feature type="binding site" evidence="1">
    <location>
        <position position="193"/>
    </location>
    <ligand>
        <name>substrate</name>
    </ligand>
</feature>
<feature type="binding site" evidence="1">
    <location>
        <position position="198"/>
    </location>
    <ligand>
        <name>Mg(2+)</name>
        <dbReference type="ChEBI" id="CHEBI:18420"/>
    </ligand>
</feature>
<feature type="binding site" evidence="1">
    <location>
        <begin position="199"/>
        <end position="201"/>
    </location>
    <ligand>
        <name>substrate</name>
    </ligand>
</feature>
<feature type="binding site" evidence="1">
    <location>
        <position position="212"/>
    </location>
    <ligand>
        <name>Mg(2+)</name>
        <dbReference type="ChEBI" id="CHEBI:18420"/>
    </ligand>
</feature>